<protein>
    <recommendedName>
        <fullName evidence="2">Small ribosomal subunit protein uS4c</fullName>
    </recommendedName>
    <alternativeName>
        <fullName>30S ribosomal protein S4, chloroplastic</fullName>
    </alternativeName>
</protein>
<gene>
    <name type="primary">rps4</name>
</gene>
<reference key="1">
    <citation type="journal article" date="2004" name="Syst. Bot.">
        <title>Phylogeny of horsetails (Equisetum) based on the chloroplast rps4 gene and adjacent noncoding sequences.</title>
        <authorList>
            <person name="Guillon J.-M."/>
        </authorList>
        <dbReference type="AGRICOLA" id="IND43653535"/>
    </citation>
    <scope>NUCLEOTIDE SEQUENCE [GENOMIC DNA]</scope>
</reference>
<dbReference type="EMBL" id="AJ583685">
    <property type="protein sequence ID" value="CAE47539.1"/>
    <property type="molecule type" value="Genomic_DNA"/>
</dbReference>
<dbReference type="RefSeq" id="YP_011095487.1">
    <property type="nucleotide sequence ID" value="NC_088053.1"/>
</dbReference>
<dbReference type="SMR" id="Q6H9K8"/>
<dbReference type="GeneID" id="89448142"/>
<dbReference type="GO" id="GO:0009507">
    <property type="term" value="C:chloroplast"/>
    <property type="evidence" value="ECO:0007669"/>
    <property type="project" value="UniProtKB-SubCell"/>
</dbReference>
<dbReference type="GO" id="GO:0015935">
    <property type="term" value="C:small ribosomal subunit"/>
    <property type="evidence" value="ECO:0007669"/>
    <property type="project" value="InterPro"/>
</dbReference>
<dbReference type="GO" id="GO:0019843">
    <property type="term" value="F:rRNA binding"/>
    <property type="evidence" value="ECO:0007669"/>
    <property type="project" value="UniProtKB-UniRule"/>
</dbReference>
<dbReference type="GO" id="GO:0003735">
    <property type="term" value="F:structural constituent of ribosome"/>
    <property type="evidence" value="ECO:0007669"/>
    <property type="project" value="InterPro"/>
</dbReference>
<dbReference type="GO" id="GO:0042274">
    <property type="term" value="P:ribosomal small subunit biogenesis"/>
    <property type="evidence" value="ECO:0007669"/>
    <property type="project" value="TreeGrafter"/>
</dbReference>
<dbReference type="GO" id="GO:0006412">
    <property type="term" value="P:translation"/>
    <property type="evidence" value="ECO:0007669"/>
    <property type="project" value="UniProtKB-UniRule"/>
</dbReference>
<dbReference type="CDD" id="cd00165">
    <property type="entry name" value="S4"/>
    <property type="match status" value="1"/>
</dbReference>
<dbReference type="FunFam" id="3.10.290.10:FF:000001">
    <property type="entry name" value="30S ribosomal protein S4"/>
    <property type="match status" value="1"/>
</dbReference>
<dbReference type="FunFam" id="1.10.1050.10:FF:000002">
    <property type="entry name" value="30S ribosomal protein S4, chloroplastic"/>
    <property type="match status" value="1"/>
</dbReference>
<dbReference type="Gene3D" id="1.10.1050.10">
    <property type="entry name" value="Ribosomal Protein S4 Delta 41, Chain A, domain 1"/>
    <property type="match status" value="1"/>
</dbReference>
<dbReference type="Gene3D" id="3.10.290.10">
    <property type="entry name" value="RNA-binding S4 domain"/>
    <property type="match status" value="1"/>
</dbReference>
<dbReference type="HAMAP" id="MF_01306_B">
    <property type="entry name" value="Ribosomal_uS4_B"/>
    <property type="match status" value="1"/>
</dbReference>
<dbReference type="InterPro" id="IPR022801">
    <property type="entry name" value="Ribosomal_uS4"/>
</dbReference>
<dbReference type="InterPro" id="IPR005709">
    <property type="entry name" value="Ribosomal_uS4_bac-type"/>
</dbReference>
<dbReference type="InterPro" id="IPR018079">
    <property type="entry name" value="Ribosomal_uS4_CS"/>
</dbReference>
<dbReference type="InterPro" id="IPR001912">
    <property type="entry name" value="Ribosomal_uS4_N"/>
</dbReference>
<dbReference type="InterPro" id="IPR002942">
    <property type="entry name" value="S4_RNA-bd"/>
</dbReference>
<dbReference type="InterPro" id="IPR036986">
    <property type="entry name" value="S4_RNA-bd_sf"/>
</dbReference>
<dbReference type="NCBIfam" id="NF003717">
    <property type="entry name" value="PRK05327.1"/>
    <property type="match status" value="1"/>
</dbReference>
<dbReference type="NCBIfam" id="TIGR01017">
    <property type="entry name" value="rpsD_bact"/>
    <property type="match status" value="1"/>
</dbReference>
<dbReference type="PANTHER" id="PTHR11831">
    <property type="entry name" value="30S 40S RIBOSOMAL PROTEIN"/>
    <property type="match status" value="1"/>
</dbReference>
<dbReference type="PANTHER" id="PTHR11831:SF4">
    <property type="entry name" value="SMALL RIBOSOMAL SUBUNIT PROTEIN US4M"/>
    <property type="match status" value="1"/>
</dbReference>
<dbReference type="Pfam" id="PF00163">
    <property type="entry name" value="Ribosomal_S4"/>
    <property type="match status" value="1"/>
</dbReference>
<dbReference type="Pfam" id="PF01479">
    <property type="entry name" value="S4"/>
    <property type="match status" value="1"/>
</dbReference>
<dbReference type="SMART" id="SM01390">
    <property type="entry name" value="Ribosomal_S4"/>
    <property type="match status" value="1"/>
</dbReference>
<dbReference type="SMART" id="SM00363">
    <property type="entry name" value="S4"/>
    <property type="match status" value="1"/>
</dbReference>
<dbReference type="SUPFAM" id="SSF55174">
    <property type="entry name" value="Alpha-L RNA-binding motif"/>
    <property type="match status" value="1"/>
</dbReference>
<dbReference type="PROSITE" id="PS00632">
    <property type="entry name" value="RIBOSOMAL_S4"/>
    <property type="match status" value="1"/>
</dbReference>
<dbReference type="PROSITE" id="PS50889">
    <property type="entry name" value="S4"/>
    <property type="match status" value="1"/>
</dbReference>
<keyword id="KW-0150">Chloroplast</keyword>
<keyword id="KW-0934">Plastid</keyword>
<keyword id="KW-0687">Ribonucleoprotein</keyword>
<keyword id="KW-0689">Ribosomal protein</keyword>
<keyword id="KW-0694">RNA-binding</keyword>
<keyword id="KW-0699">rRNA-binding</keyword>
<accession>Q6H9K8</accession>
<geneLocation type="chloroplast"/>
<proteinExistence type="inferred from homology"/>
<sequence>MSRYRGPRLRIIRRLRNLPGLTNKLIESKKNQASGSDQSNQKKVSQYCIRLEAKQRLRFNYGLTERQLLNYVRIARCAKGSTGQILLQLLEMRLDNILFRLGVVPTIPSARQLINHRHILVNNRIVDIPSFHCKPKDIITIGAPKTYQSIITKRIESFAKDQIPDHLTLSLSEPKKPKGFVNYLINRESIGLKINELLVVEYYSRKA</sequence>
<organism>
    <name type="scientific">Equisetum palustre</name>
    <name type="common">Marsh horsetail</name>
    <dbReference type="NCBI Taxonomy" id="113538"/>
    <lineage>
        <taxon>Eukaryota</taxon>
        <taxon>Viridiplantae</taxon>
        <taxon>Streptophyta</taxon>
        <taxon>Embryophyta</taxon>
        <taxon>Tracheophyta</taxon>
        <taxon>Polypodiopsida</taxon>
        <taxon>Equisetidae</taxon>
        <taxon>Equisetales</taxon>
        <taxon>Equisetaceae</taxon>
        <taxon>Equisetum</taxon>
    </lineage>
</organism>
<evidence type="ECO:0000250" key="1"/>
<evidence type="ECO:0000305" key="2"/>
<feature type="chain" id="PRO_0000132579" description="Small ribosomal subunit protein uS4c">
    <location>
        <begin position="1"/>
        <end position="207"/>
    </location>
</feature>
<feature type="domain" description="S4 RNA-binding">
    <location>
        <begin position="92"/>
        <end position="156"/>
    </location>
</feature>
<name>RR4_EQUPA</name>
<comment type="function">
    <text evidence="1">One of the primary rRNA binding proteins, it binds directly to 16S rRNA where it nucleates assembly of the body of the 30S subunit.</text>
</comment>
<comment type="function">
    <text evidence="1">With S5 and S12 plays an important role in translational accuracy.</text>
</comment>
<comment type="subunit">
    <text evidence="1">Part of the 30S ribosomal subunit. Contacts protein S5. The interaction surface between S4 and S5 is involved in control of translational fidelity (By similarity).</text>
</comment>
<comment type="subcellular location">
    <subcellularLocation>
        <location>Plastid</location>
        <location>Chloroplast</location>
    </subcellularLocation>
</comment>
<comment type="similarity">
    <text evidence="2">Belongs to the universal ribosomal protein uS4 family.</text>
</comment>